<protein>
    <recommendedName>
        <fullName evidence="1">Protein VP3</fullName>
    </recommendedName>
    <domain>
        <recommendedName>
            <fullName evidence="1">2',5'-phosphodiesterase</fullName>
            <ecNumber evidence="1">3.1.4.-</ecNumber>
        </recommendedName>
    </domain>
    <domain>
        <recommendedName>
            <fullName evidence="1">mRNA guanylyltransferase</fullName>
            <ecNumber evidence="1">2.7.7.50</ecNumber>
        </recommendedName>
    </domain>
    <domain>
        <recommendedName>
            <fullName evidence="1">mRNA (guanine-N(7))-methyltransferase</fullName>
            <ecNumber evidence="1">2.1.1.56</ecNumber>
        </recommendedName>
    </domain>
</protein>
<dbReference type="EC" id="3.1.4.-" evidence="1"/>
<dbReference type="EC" id="2.7.7.50" evidence="1"/>
<dbReference type="EC" id="2.1.1.56" evidence="1"/>
<dbReference type="EMBL" id="AY740739">
    <property type="protein sequence ID" value="AAU43797.1"/>
    <property type="molecule type" value="Genomic_RNA"/>
</dbReference>
<dbReference type="SMR" id="Q3ZK57"/>
<dbReference type="Proteomes" id="UP000008655">
    <property type="component" value="Genome"/>
</dbReference>
<dbReference type="GO" id="GO:0019013">
    <property type="term" value="C:viral nucleocapsid"/>
    <property type="evidence" value="ECO:0007669"/>
    <property type="project" value="UniProtKB-UniRule"/>
</dbReference>
<dbReference type="GO" id="GO:0005525">
    <property type="term" value="F:GTP binding"/>
    <property type="evidence" value="ECO:0007669"/>
    <property type="project" value="UniProtKB-UniRule"/>
</dbReference>
<dbReference type="GO" id="GO:0016787">
    <property type="term" value="F:hydrolase activity"/>
    <property type="evidence" value="ECO:0007669"/>
    <property type="project" value="UniProtKB-KW"/>
</dbReference>
<dbReference type="GO" id="GO:0004482">
    <property type="term" value="F:mRNA 5'-cap (guanine-N7-)-methyltransferase activity"/>
    <property type="evidence" value="ECO:0007669"/>
    <property type="project" value="UniProtKB-UniRule"/>
</dbReference>
<dbReference type="GO" id="GO:0004484">
    <property type="term" value="F:mRNA guanylyltransferase activity"/>
    <property type="evidence" value="ECO:0007669"/>
    <property type="project" value="UniProtKB-UniRule"/>
</dbReference>
<dbReference type="GO" id="GO:0003723">
    <property type="term" value="F:RNA binding"/>
    <property type="evidence" value="ECO:0007669"/>
    <property type="project" value="UniProtKB-UniRule"/>
</dbReference>
<dbReference type="GO" id="GO:0052170">
    <property type="term" value="P:symbiont-mediated suppression of host innate immune response"/>
    <property type="evidence" value="ECO:0007669"/>
    <property type="project" value="UniProtKB-KW"/>
</dbReference>
<dbReference type="GO" id="GO:0016032">
    <property type="term" value="P:viral process"/>
    <property type="evidence" value="ECO:0007669"/>
    <property type="project" value="UniProtKB-UniRule"/>
</dbReference>
<dbReference type="CDD" id="cd20757">
    <property type="entry name" value="capping_2-OMTase_Rotavirus"/>
    <property type="match status" value="1"/>
</dbReference>
<dbReference type="HAMAP" id="MF_04124">
    <property type="entry name" value="Rota_VP3"/>
    <property type="match status" value="1"/>
</dbReference>
<dbReference type="HAMAP" id="MF_04128">
    <property type="entry name" value="Rota_VP3_A"/>
    <property type="match status" value="1"/>
</dbReference>
<dbReference type="InterPro" id="IPR011181">
    <property type="entry name" value="VP3_Rotav"/>
</dbReference>
<dbReference type="Pfam" id="PF06929">
    <property type="entry name" value="Rotavirus_VP3"/>
    <property type="match status" value="1"/>
</dbReference>
<dbReference type="PIRSF" id="PIRSF004015">
    <property type="entry name" value="LigT_rotavirus"/>
    <property type="match status" value="1"/>
</dbReference>
<dbReference type="PROSITE" id="PS51589">
    <property type="entry name" value="SAM_MT56_VP3"/>
    <property type="match status" value="1"/>
</dbReference>
<sequence>MKVLALRHSVAQVYADTQVYTHDDTKDSYENAFLISNLTTHNILYFNYSVKTLEILNKSGIAAIEIQSLEELFTLIRCNFTYDYENNVVYLHDYSYYTNNEIRTDQHWITKTNIEEYLLPGWKLTYVGYNGNDTRGHYNFSFTCQNAATDDDIIIEYIYSEALDFQNFMLKKIKERMTTSLPIARLSNRVFRDKLFPLLVKKHKRVINVGPRNESMFTFLNFPSIRQFSNGPYLVKNTIKLKQERWLGKRVSQFDIGQYKNMMNVITTIYHYYNLYQEKPIIYMVGSAPSYWIYDVRQYSEFLFETWDPLDTPYSSIHHKELFFEKDIGKLKDNSILYIDIRTDRGNVDWKEWRKIVELQTINNLDLAYKYLATGKSKVCCVKLTAMDLELPVSAKLLHHPTTEIRSEFYLLLDIWDVNNVKRFIPKGVLYSFINNVITDNVFIQSPFKIRTSMSDYIVALYALSNDFNNRADIINLINNQKQSLITVRINNTFKDEPKVGFKNIYDWTFLPTDFDTTNAIVTSYDGCLGMFGLSISLASKPTGNNHLFILNGTDKYYKLDQFANHTGISRRSHQIRFSESATSYSGYIFRDLSNNNFNLIGTNVENSVSGHVYNALIYYRYNYSFDLKRWIYLHSIEKVDIEGGKYYEHAPIELIYACRSAKEFALLQDDLTVLRYANEIENYINKVYSITYADDPNYFIGIKFDNIPYTYDVKVPHLTFGVLYISDNMIPDVVKIMKSMKQELFGMDVTTSYTYMLSDGIYVANVSGVLATYFKMYNLFYKNQITFGQSRMFIPHITLSFRNNKTVRIETTKLRIKSIYLRKIRGDTMFDMSE</sequence>
<evidence type="ECO:0000255" key="1">
    <source>
        <dbReference type="HAMAP-Rule" id="MF_04128"/>
    </source>
</evidence>
<keyword id="KW-0342">GTP-binding</keyword>
<keyword id="KW-0945">Host-virus interaction</keyword>
<keyword id="KW-0378">Hydrolase</keyword>
<keyword id="KW-1090">Inhibition of host innate immune response by virus</keyword>
<keyword id="KW-0489">Methyltransferase</keyword>
<keyword id="KW-0506">mRNA capping</keyword>
<keyword id="KW-0507">mRNA processing</keyword>
<keyword id="KW-0511">Multifunctional enzyme</keyword>
<keyword id="KW-0547">Nucleotide-binding</keyword>
<keyword id="KW-0548">Nucleotidyltransferase</keyword>
<keyword id="KW-0694">RNA-binding</keyword>
<keyword id="KW-0949">S-adenosyl-L-methionine</keyword>
<keyword id="KW-0808">Transferase</keyword>
<keyword id="KW-0899">Viral immunoevasion</keyword>
<keyword id="KW-0946">Virion</keyword>
<proteinExistence type="inferred from homology"/>
<organismHost>
    <name type="scientific">Homo sapiens</name>
    <name type="common">Human</name>
    <dbReference type="NCBI Taxonomy" id="9606"/>
</organismHost>
<reference key="1">
    <citation type="journal article" date="2006" name="J. Virol.">
        <title>Full genomic analysis of human rotavirus strain B4106 and lapine rotavirus strain 30/96 provides evidence for interspecies transmission.</title>
        <authorList>
            <person name="Matthijnssens J."/>
            <person name="Rahman M."/>
            <person name="Martella V."/>
            <person name="Xuelei Y."/>
            <person name="De Vos S."/>
            <person name="De Leener K."/>
            <person name="Ciarlet M."/>
            <person name="Buonavoglia C."/>
            <person name="Van Ranst M."/>
        </authorList>
    </citation>
    <scope>NUCLEOTIDE SEQUENCE [GENOMIC RNA]</scope>
</reference>
<organism>
    <name type="scientific">Rotavirus A (isolate RVA/Human/Belgium/B4106/2000/G3P11[14])</name>
    <name type="common">RV-A</name>
    <name type="synonym">Rotavirus A (isolate B4106)</name>
    <dbReference type="NCBI Taxonomy" id="578843"/>
    <lineage>
        <taxon>Viruses</taxon>
        <taxon>Riboviria</taxon>
        <taxon>Orthornavirae</taxon>
        <taxon>Duplornaviricota</taxon>
        <taxon>Resentoviricetes</taxon>
        <taxon>Reovirales</taxon>
        <taxon>Sedoreoviridae</taxon>
        <taxon>Rotavirus</taxon>
        <taxon>Rotavirus A</taxon>
    </lineage>
</organism>
<accession>Q3ZK57</accession>
<feature type="chain" id="PRO_0000368067" description="Protein VP3">
    <location>
        <begin position="1"/>
        <end position="835"/>
    </location>
</feature>
<feature type="region of interest" description="N7-methyltransferase activity" evidence="1">
    <location>
        <begin position="171"/>
        <end position="245"/>
    </location>
</feature>
<feature type="region of interest" description="2'-O-methyltransferase activity" evidence="1">
    <location>
        <begin position="246"/>
        <end position="428"/>
    </location>
</feature>
<feature type="region of interest" description="N7-methyltransferase activity" evidence="1">
    <location>
        <begin position="429"/>
        <end position="555"/>
    </location>
</feature>
<feature type="region of interest" description="GTase/RTPase activity" evidence="1">
    <location>
        <begin position="556"/>
        <end position="692"/>
    </location>
</feature>
<feature type="region of interest" description="2'-5'-phosphodiesterase activity" evidence="1">
    <location>
        <begin position="693"/>
        <end position="835"/>
    </location>
</feature>
<feature type="active site" description="For 2'-5'-phosphodiesterase activity" evidence="1">
    <location>
        <position position="718"/>
    </location>
</feature>
<feature type="active site" description="For 2'-5'-phosphodiesterase activity" evidence="1">
    <location>
        <position position="720"/>
    </location>
</feature>
<feature type="active site" description="For 2'-5'-phosphodiesterase activity" evidence="1">
    <location>
        <position position="797"/>
    </location>
</feature>
<feature type="active site" description="For 2'-5'-phosphodiesterase activity" evidence="1">
    <location>
        <position position="799"/>
    </location>
</feature>
<comment type="function">
    <text evidence="1">Multifunctional enzyme involved in mRNA capping. Catalyzes the formation of the 5' cap structure on the viral plus-strand transcripts. Specifically binds to GTP and displays guanylyltransferase and methyltransferase activities. Has affinity for ssRNA but not for dsRNA. Capping activity is non-specific and caps RNAs that initiate with either a G or an A residue. Together with VP1 polymerase, forms a VP1-VP3 complex positioned near the channels situated at each of the five-fold vertices of the core. Following infection, the outermost layer of the virus is lost, leaving a double-layered particle (DLP) made up of the core and VP6 shell. VP1 then catalyzes the transcription of fully conservative plus-strand genomic RNAs that are capped by VP3 and extruded through the DLP's channels into the cytoplasm where they function as mRNAs for translation of viral proteins. DLPs probably have an RNA triphosphatase activity as well, whereas open cores do not.</text>
</comment>
<comment type="function">
    <text evidence="1">Counteracts the host innate immune response thanks to its phosphodiesterase that degrades the 5'-triphosphorylated, 2'-5' linked adenylate oligomers produced by the host cell IFN-inducible 2',5'-oligoadenylate synthetase (OAS). The host RNaseL is therefore not activated.</text>
</comment>
<comment type="catalytic activity">
    <reaction evidence="1">
        <text>a 5'-end diphospho-ribonucleoside in mRNA + GTP + H(+) = a 5'-end (5'-triphosphoguanosine)-ribonucleoside in mRNA + diphosphate</text>
        <dbReference type="Rhea" id="RHEA:67012"/>
        <dbReference type="Rhea" id="RHEA-COMP:17165"/>
        <dbReference type="Rhea" id="RHEA-COMP:17166"/>
        <dbReference type="ChEBI" id="CHEBI:15378"/>
        <dbReference type="ChEBI" id="CHEBI:33019"/>
        <dbReference type="ChEBI" id="CHEBI:37565"/>
        <dbReference type="ChEBI" id="CHEBI:167616"/>
        <dbReference type="ChEBI" id="CHEBI:167617"/>
        <dbReference type="EC" id="2.7.7.50"/>
    </reaction>
</comment>
<comment type="catalytic activity">
    <reaction evidence="1">
        <text>a 5'-end (5'-triphosphoguanosine)-ribonucleoside in mRNA + S-adenosyl-L-methionine = a 5'-end (N(7)-methyl 5'-triphosphoguanosine)-ribonucleoside in mRNA + S-adenosyl-L-homocysteine</text>
        <dbReference type="Rhea" id="RHEA:67008"/>
        <dbReference type="Rhea" id="RHEA-COMP:17166"/>
        <dbReference type="Rhea" id="RHEA-COMP:17167"/>
        <dbReference type="ChEBI" id="CHEBI:57856"/>
        <dbReference type="ChEBI" id="CHEBI:59789"/>
        <dbReference type="ChEBI" id="CHEBI:156461"/>
        <dbReference type="ChEBI" id="CHEBI:167617"/>
        <dbReference type="EC" id="2.1.1.56"/>
    </reaction>
</comment>
<comment type="catalytic activity">
    <reaction evidence="1">
        <text>5'-triphosphoadenylyl-(2'-&gt;5')-adenylyl-(2'-&gt;5')-adenosine + 2 H2O = 2 AMP + ATP + 2 H(+)</text>
        <dbReference type="Rhea" id="RHEA:45964"/>
        <dbReference type="ChEBI" id="CHEBI:15377"/>
        <dbReference type="ChEBI" id="CHEBI:15378"/>
        <dbReference type="ChEBI" id="CHEBI:30616"/>
        <dbReference type="ChEBI" id="CHEBI:67143"/>
        <dbReference type="ChEBI" id="CHEBI:456215"/>
    </reaction>
</comment>
<comment type="subunit">
    <text evidence="1">Interacts with VP1. Interacts with VP2.</text>
</comment>
<comment type="subcellular location">
    <subcellularLocation>
        <location evidence="1">Virion</location>
    </subcellularLocation>
    <text evidence="1">Attached inside the inner capsid as a minor component. There are about 11 to 12 copies per virion.</text>
</comment>
<comment type="domain">
    <text evidence="1">Contains a bipartite N7-methyltransferase domain, a 2'-O-methyltransferase domain and a GTase/RTPase domain. The C-terminus contains a phosphodiesterase domain that degrades the 5'-triphosphorylated, 2'-5' linked adenylate oligomers produced by the host cell in response to IFN stimulation.</text>
</comment>
<comment type="similarity">
    <text evidence="1">Belongs to the rotavirus VP3 family.</text>
</comment>
<name>VP3_ROT41</name>